<sequence>MVYSYTEKKRIRKDFGKRPQVLDIPYLLSIQLDSFKKFIKIDPEGLHGLEAAFRSVFPICGYNGNSELQYVSYRLGDAIFDVKECQIRGATYSAPLRVRLRLVIYERDVLEPTVKDIKEQEVYMGEIPLMTNNGTFIINGTERVVVSQLHRSPGVFFDSDKGKTHSSGKVLYNARIIPYRGSWLDFEFDPKDNLFVRIDRRRKLPVTIILRALNYNTEEILNLFFEKNIFNINNNKIQLELVSERLRGETASFDIKKNGKIYVKKGRRITAKHIQELKKDKINSITVPVEYILGRIVSKNYLDPKTGETIILANTELSLEILTKLKNSSFFSIETLFTNDLDHGPYISETLRIDSSHDRISALMEIYRVMRPGEPLTKEATENLFENLFFSEDRYDLSSVGRMKFNRSLLRKKIEGVSTLNKEDIIDVIKKLIDIRNGKGEVDDIDHLGNRRIRSVGEMAENQFRIGLVRVERAVKERLSVGDLDTLMPQDMINAKPISAAIKEFFGSSQLSQFMDQNNPLSEITHKRRISALGLGGLTRERAGFEVRDVHPTHYGRVCPIETPEGPNIGLINSLSVYARTNSYGFLETPYRKVHNRLVTDEIHYLSAIEEGNYVIAQANTNIDKNNYFIDDLVTCRHKGESSLFNCNQVDYMDVSTQQIVSVGASLIPFLEHDDANRALMGANMQRQAVPTLKTDKPLVGTGMERAVAVDSGVTVVAKRGGIIQYIDASRIIIKVNEEETYTGEAGIDIYNLTKYTRSNQNTCINQKPCVKLREKINKNDVLADGPSTDLGELALGQNMRVAFMPWNGYNFEDSILVSEKVVQEDRFTTIHIQELSCISRDTKLGPEEISSDIPNVGEAALSKLDESGIVYIGAEVTGGDILVGKVTPKGETQLTPEEKLLRAIFGEKASDVKDSSLRVPNGVSGTVIDVQIFTRDGVKKDKRALEIENMQLKKAKKDLTEEFKIFELSLFSRIKKTLVSFNIKEDFLNKLPYEKWFKIDIQDRNKKKEIEKLLQQHNQLKKEFEKKIEVKRRKITQGDDLAPGVLKIVKVYLAVKRQIQPGDKMAGRHGNKGVISKINPVEDMPYDENGIPVDIVLNPLGVPSRMNIGQILETHLGMAAKGIGNKINNMLKKQEKISNLKKFIQKAFDLGENLRQKVNLDDFSNEEILDLAKNLKKGMPISTPVFDGAQENEIKQMLKFSNLPTSGQISLFDGRTGEKFERPVTVGYMYMLKLNHLVDDKMHARSTGSYSLVTQQPLGGKAQFGGQRFGEMEVWALEAYGASYTLQEMLTVKSDDVNGRTKMYKNIVDGNHQMEPGMPESFNVLLKEIRSLGINIELENE</sequence>
<protein>
    <recommendedName>
        <fullName evidence="1">DNA-directed RNA polymerase subunit beta</fullName>
        <shortName evidence="1">RNAP subunit beta</shortName>
        <ecNumber evidence="1">2.7.7.6</ecNumber>
    </recommendedName>
    <alternativeName>
        <fullName evidence="1">RNA polymerase subunit beta</fullName>
    </alternativeName>
    <alternativeName>
        <fullName evidence="1">Transcriptase subunit beta</fullName>
    </alternativeName>
</protein>
<feature type="chain" id="PRO_0000047873" description="DNA-directed RNA polymerase subunit beta">
    <location>
        <begin position="1"/>
        <end position="1342"/>
    </location>
</feature>
<evidence type="ECO:0000255" key="1">
    <source>
        <dbReference type="HAMAP-Rule" id="MF_01321"/>
    </source>
</evidence>
<reference key="1">
    <citation type="journal article" date="1992" name="Curr. Microbiol.">
        <title>Sequence analysis of an aphid endosymbiont DNA fragment containing rpoB (beta-subunit of RNA polymerase) and portions of rplL and rpoC.</title>
        <authorList>
            <person name="Clark M.A."/>
            <person name="Baumann L."/>
            <person name="Baumann P."/>
        </authorList>
    </citation>
    <scope>NUCLEOTIDE SEQUENCE [GENOMIC DNA]</scope>
</reference>
<reference key="2">
    <citation type="journal article" date="2002" name="Science">
        <title>50 million years of genomic stasis in endosymbiotic bacteria.</title>
        <authorList>
            <person name="Tamas I."/>
            <person name="Klasson L."/>
            <person name="Canbaeck B."/>
            <person name="Naeslund A.K."/>
            <person name="Eriksson A.-S."/>
            <person name="Wernegreen J.J."/>
            <person name="Sandstroem J.P."/>
            <person name="Moran N.A."/>
            <person name="Andersson S.G.E."/>
        </authorList>
    </citation>
    <scope>NUCLEOTIDE SEQUENCE [LARGE SCALE GENOMIC DNA]</scope>
    <source>
        <strain>Sg</strain>
    </source>
</reference>
<name>RPOB_BUCAP</name>
<comment type="function">
    <text evidence="1">DNA-dependent RNA polymerase catalyzes the transcription of DNA into RNA using the four ribonucleoside triphosphates as substrates.</text>
</comment>
<comment type="catalytic activity">
    <reaction evidence="1">
        <text>RNA(n) + a ribonucleoside 5'-triphosphate = RNA(n+1) + diphosphate</text>
        <dbReference type="Rhea" id="RHEA:21248"/>
        <dbReference type="Rhea" id="RHEA-COMP:14527"/>
        <dbReference type="Rhea" id="RHEA-COMP:17342"/>
        <dbReference type="ChEBI" id="CHEBI:33019"/>
        <dbReference type="ChEBI" id="CHEBI:61557"/>
        <dbReference type="ChEBI" id="CHEBI:140395"/>
        <dbReference type="EC" id="2.7.7.6"/>
    </reaction>
</comment>
<comment type="subunit">
    <text evidence="1">The RNAP catalytic core consists of 2 alpha, 1 beta, 1 beta' and 1 omega subunit. When a sigma factor is associated with the core the holoenzyme is formed, which can initiate transcription.</text>
</comment>
<comment type="similarity">
    <text evidence="1">Belongs to the RNA polymerase beta chain family.</text>
</comment>
<dbReference type="EC" id="2.7.7.6" evidence="1"/>
<dbReference type="EMBL" id="Z11913">
    <property type="protein sequence ID" value="CAA77970.1"/>
    <property type="molecule type" value="Genomic_DNA"/>
</dbReference>
<dbReference type="EMBL" id="AE013218">
    <property type="protein sequence ID" value="AAM67606.1"/>
    <property type="molecule type" value="Genomic_DNA"/>
</dbReference>
<dbReference type="PIR" id="S32680">
    <property type="entry name" value="S32680"/>
</dbReference>
<dbReference type="RefSeq" id="WP_011053572.1">
    <property type="nucleotide sequence ID" value="NC_004061.1"/>
</dbReference>
<dbReference type="SMR" id="P41184"/>
<dbReference type="STRING" id="198804.BUsg_035"/>
<dbReference type="GeneID" id="93003498"/>
<dbReference type="KEGG" id="bas:BUsg_035"/>
<dbReference type="eggNOG" id="COG0085">
    <property type="taxonomic scope" value="Bacteria"/>
</dbReference>
<dbReference type="HOGENOM" id="CLU_000524_4_3_6"/>
<dbReference type="Proteomes" id="UP000000416">
    <property type="component" value="Chromosome"/>
</dbReference>
<dbReference type="GO" id="GO:0000428">
    <property type="term" value="C:DNA-directed RNA polymerase complex"/>
    <property type="evidence" value="ECO:0007669"/>
    <property type="project" value="UniProtKB-KW"/>
</dbReference>
<dbReference type="GO" id="GO:0003677">
    <property type="term" value="F:DNA binding"/>
    <property type="evidence" value="ECO:0007669"/>
    <property type="project" value="UniProtKB-UniRule"/>
</dbReference>
<dbReference type="GO" id="GO:0003899">
    <property type="term" value="F:DNA-directed RNA polymerase activity"/>
    <property type="evidence" value="ECO:0007669"/>
    <property type="project" value="UniProtKB-UniRule"/>
</dbReference>
<dbReference type="GO" id="GO:0032549">
    <property type="term" value="F:ribonucleoside binding"/>
    <property type="evidence" value="ECO:0007669"/>
    <property type="project" value="InterPro"/>
</dbReference>
<dbReference type="GO" id="GO:0006351">
    <property type="term" value="P:DNA-templated transcription"/>
    <property type="evidence" value="ECO:0007669"/>
    <property type="project" value="UniProtKB-UniRule"/>
</dbReference>
<dbReference type="CDD" id="cd00653">
    <property type="entry name" value="RNA_pol_B_RPB2"/>
    <property type="match status" value="1"/>
</dbReference>
<dbReference type="FunFam" id="2.30.150.10:FF:000001">
    <property type="entry name" value="DNA-directed RNA polymerase subunit beta"/>
    <property type="match status" value="1"/>
</dbReference>
<dbReference type="FunFam" id="2.40.270.10:FF:000003">
    <property type="entry name" value="DNA-directed RNA polymerase subunit beta"/>
    <property type="match status" value="1"/>
</dbReference>
<dbReference type="FunFam" id="2.40.270.10:FF:000004">
    <property type="entry name" value="DNA-directed RNA polymerase subunit beta"/>
    <property type="match status" value="1"/>
</dbReference>
<dbReference type="FunFam" id="2.40.50.100:FF:000006">
    <property type="entry name" value="DNA-directed RNA polymerase subunit beta"/>
    <property type="match status" value="1"/>
</dbReference>
<dbReference type="FunFam" id="2.40.50.150:FF:000001">
    <property type="entry name" value="DNA-directed RNA polymerase subunit beta"/>
    <property type="match status" value="1"/>
</dbReference>
<dbReference type="FunFam" id="3.90.1100.10:FF:000002">
    <property type="entry name" value="DNA-directed RNA polymerase subunit beta"/>
    <property type="match status" value="1"/>
</dbReference>
<dbReference type="FunFam" id="3.90.1110.10:FF:000001">
    <property type="entry name" value="DNA-directed RNA polymerase subunit beta"/>
    <property type="match status" value="1"/>
</dbReference>
<dbReference type="FunFam" id="3.90.1110.10:FF:000004">
    <property type="entry name" value="DNA-directed RNA polymerase subunit beta"/>
    <property type="match status" value="1"/>
</dbReference>
<dbReference type="FunFam" id="3.90.1800.10:FF:000001">
    <property type="entry name" value="DNA-directed RNA polymerase subunit beta"/>
    <property type="match status" value="1"/>
</dbReference>
<dbReference type="Gene3D" id="2.40.50.100">
    <property type="match status" value="1"/>
</dbReference>
<dbReference type="Gene3D" id="2.40.50.150">
    <property type="match status" value="1"/>
</dbReference>
<dbReference type="Gene3D" id="3.90.1100.10">
    <property type="match status" value="2"/>
</dbReference>
<dbReference type="Gene3D" id="2.30.150.10">
    <property type="entry name" value="DNA-directed RNA polymerase, beta subunit, external 1 domain"/>
    <property type="match status" value="1"/>
</dbReference>
<dbReference type="Gene3D" id="2.40.270.10">
    <property type="entry name" value="DNA-directed RNA polymerase, subunit 2, domain 6"/>
    <property type="match status" value="1"/>
</dbReference>
<dbReference type="Gene3D" id="3.90.1800.10">
    <property type="entry name" value="RNA polymerase alpha subunit dimerisation domain"/>
    <property type="match status" value="1"/>
</dbReference>
<dbReference type="Gene3D" id="3.90.1110.10">
    <property type="entry name" value="RNA polymerase Rpb2, domain 2"/>
    <property type="match status" value="1"/>
</dbReference>
<dbReference type="HAMAP" id="MF_01321">
    <property type="entry name" value="RNApol_bact_RpoB"/>
    <property type="match status" value="1"/>
</dbReference>
<dbReference type="InterPro" id="IPR042107">
    <property type="entry name" value="DNA-dir_RNA_pol_bsu_ext_1_sf"/>
</dbReference>
<dbReference type="InterPro" id="IPR019462">
    <property type="entry name" value="DNA-dir_RNA_pol_bsu_external_1"/>
</dbReference>
<dbReference type="InterPro" id="IPR015712">
    <property type="entry name" value="DNA-dir_RNA_pol_su2"/>
</dbReference>
<dbReference type="InterPro" id="IPR007120">
    <property type="entry name" value="DNA-dir_RNAP_su2_dom"/>
</dbReference>
<dbReference type="InterPro" id="IPR037033">
    <property type="entry name" value="DNA-dir_RNAP_su2_hyb_sf"/>
</dbReference>
<dbReference type="InterPro" id="IPR010243">
    <property type="entry name" value="RNA_pol_bsu_bac"/>
</dbReference>
<dbReference type="InterPro" id="IPR007121">
    <property type="entry name" value="RNA_pol_bsu_CS"/>
</dbReference>
<dbReference type="InterPro" id="IPR007644">
    <property type="entry name" value="RNA_pol_bsu_protrusion"/>
</dbReference>
<dbReference type="InterPro" id="IPR007642">
    <property type="entry name" value="RNA_pol_Rpb2_2"/>
</dbReference>
<dbReference type="InterPro" id="IPR037034">
    <property type="entry name" value="RNA_pol_Rpb2_2_sf"/>
</dbReference>
<dbReference type="InterPro" id="IPR007645">
    <property type="entry name" value="RNA_pol_Rpb2_3"/>
</dbReference>
<dbReference type="InterPro" id="IPR007641">
    <property type="entry name" value="RNA_pol_Rpb2_7"/>
</dbReference>
<dbReference type="InterPro" id="IPR014724">
    <property type="entry name" value="RNA_pol_RPB2_OB-fold"/>
</dbReference>
<dbReference type="NCBIfam" id="NF001616">
    <property type="entry name" value="PRK00405.1"/>
    <property type="match status" value="1"/>
</dbReference>
<dbReference type="NCBIfam" id="TIGR02013">
    <property type="entry name" value="rpoB"/>
    <property type="match status" value="1"/>
</dbReference>
<dbReference type="PANTHER" id="PTHR20856">
    <property type="entry name" value="DNA-DIRECTED RNA POLYMERASE I SUBUNIT 2"/>
    <property type="match status" value="1"/>
</dbReference>
<dbReference type="Pfam" id="PF04563">
    <property type="entry name" value="RNA_pol_Rpb2_1"/>
    <property type="match status" value="1"/>
</dbReference>
<dbReference type="Pfam" id="PF04561">
    <property type="entry name" value="RNA_pol_Rpb2_2"/>
    <property type="match status" value="2"/>
</dbReference>
<dbReference type="Pfam" id="PF04565">
    <property type="entry name" value="RNA_pol_Rpb2_3"/>
    <property type="match status" value="1"/>
</dbReference>
<dbReference type="Pfam" id="PF10385">
    <property type="entry name" value="RNA_pol_Rpb2_45"/>
    <property type="match status" value="1"/>
</dbReference>
<dbReference type="Pfam" id="PF00562">
    <property type="entry name" value="RNA_pol_Rpb2_6"/>
    <property type="match status" value="1"/>
</dbReference>
<dbReference type="Pfam" id="PF04560">
    <property type="entry name" value="RNA_pol_Rpb2_7"/>
    <property type="match status" value="1"/>
</dbReference>
<dbReference type="SUPFAM" id="SSF64484">
    <property type="entry name" value="beta and beta-prime subunits of DNA dependent RNA-polymerase"/>
    <property type="match status" value="1"/>
</dbReference>
<dbReference type="PROSITE" id="PS01166">
    <property type="entry name" value="RNA_POL_BETA"/>
    <property type="match status" value="1"/>
</dbReference>
<organism>
    <name type="scientific">Buchnera aphidicola subsp. Schizaphis graminum (strain Sg)</name>
    <dbReference type="NCBI Taxonomy" id="198804"/>
    <lineage>
        <taxon>Bacteria</taxon>
        <taxon>Pseudomonadati</taxon>
        <taxon>Pseudomonadota</taxon>
        <taxon>Gammaproteobacteria</taxon>
        <taxon>Enterobacterales</taxon>
        <taxon>Erwiniaceae</taxon>
        <taxon>Buchnera</taxon>
    </lineage>
</organism>
<proteinExistence type="inferred from homology"/>
<gene>
    <name evidence="1" type="primary">rpoB</name>
    <name type="ordered locus">BUsg_035</name>
</gene>
<keyword id="KW-0240">DNA-directed RNA polymerase</keyword>
<keyword id="KW-0548">Nucleotidyltransferase</keyword>
<keyword id="KW-0804">Transcription</keyword>
<keyword id="KW-0808">Transferase</keyword>
<accession>P41184</accession>